<evidence type="ECO:0000250" key="1"/>
<evidence type="ECO:0000305" key="2"/>
<keyword id="KW-0975">Bacterial flagellum</keyword>
<organism>
    <name type="scientific">Salmonella typhi</name>
    <dbReference type="NCBI Taxonomy" id="90370"/>
    <lineage>
        <taxon>Bacteria</taxon>
        <taxon>Pseudomonadati</taxon>
        <taxon>Pseudomonadota</taxon>
        <taxon>Gammaproteobacteria</taxon>
        <taxon>Enterobacterales</taxon>
        <taxon>Enterobacteriaceae</taxon>
        <taxon>Salmonella</taxon>
    </lineage>
</organism>
<gene>
    <name type="primary">flgC</name>
    <name type="synonym">fla FIII</name>
    <name type="synonym">flaW</name>
    <name type="ordered locus">STY1214</name>
    <name type="ordered locus">t1745</name>
</gene>
<dbReference type="EMBL" id="AL513382">
    <property type="protein sequence ID" value="CAD08299.1"/>
    <property type="molecule type" value="Genomic_DNA"/>
</dbReference>
<dbReference type="EMBL" id="AE014613">
    <property type="protein sequence ID" value="AAO69369.1"/>
    <property type="molecule type" value="Genomic_DNA"/>
</dbReference>
<dbReference type="RefSeq" id="NP_455668.1">
    <property type="nucleotide sequence ID" value="NC_003198.1"/>
</dbReference>
<dbReference type="RefSeq" id="WP_001196448.1">
    <property type="nucleotide sequence ID" value="NZ_WSUR01000018.1"/>
</dbReference>
<dbReference type="SMR" id="P0A1I8"/>
<dbReference type="STRING" id="220341.gene:17585179"/>
<dbReference type="KEGG" id="stt:t1745"/>
<dbReference type="KEGG" id="sty:STY1214"/>
<dbReference type="PATRIC" id="fig|220341.7.peg.1215"/>
<dbReference type="eggNOG" id="COG1558">
    <property type="taxonomic scope" value="Bacteria"/>
</dbReference>
<dbReference type="HOGENOM" id="CLU_123272_1_0_6"/>
<dbReference type="OMA" id="YVAYPNI"/>
<dbReference type="OrthoDB" id="9794148at2"/>
<dbReference type="Proteomes" id="UP000000541">
    <property type="component" value="Chromosome"/>
</dbReference>
<dbReference type="Proteomes" id="UP000002670">
    <property type="component" value="Chromosome"/>
</dbReference>
<dbReference type="GO" id="GO:0030694">
    <property type="term" value="C:bacterial-type flagellum basal body, rod"/>
    <property type="evidence" value="ECO:0007669"/>
    <property type="project" value="InterPro"/>
</dbReference>
<dbReference type="GO" id="GO:0071978">
    <property type="term" value="P:bacterial-type flagellum-dependent swarming motility"/>
    <property type="evidence" value="ECO:0007669"/>
    <property type="project" value="TreeGrafter"/>
</dbReference>
<dbReference type="InterPro" id="IPR001444">
    <property type="entry name" value="Flag_bb_rod_N"/>
</dbReference>
<dbReference type="InterPro" id="IPR019776">
    <property type="entry name" value="Flagellar_basal_body_rod_CS"/>
</dbReference>
<dbReference type="InterPro" id="IPR010930">
    <property type="entry name" value="Flg_bb/hook_C_dom"/>
</dbReference>
<dbReference type="InterPro" id="IPR006299">
    <property type="entry name" value="FlgC"/>
</dbReference>
<dbReference type="NCBIfam" id="TIGR01395">
    <property type="entry name" value="FlgC"/>
    <property type="match status" value="1"/>
</dbReference>
<dbReference type="PANTHER" id="PTHR30435:SF2">
    <property type="entry name" value="FLAGELLAR BASAL-BODY ROD PROTEIN FLGC"/>
    <property type="match status" value="1"/>
</dbReference>
<dbReference type="PANTHER" id="PTHR30435">
    <property type="entry name" value="FLAGELLAR PROTEIN"/>
    <property type="match status" value="1"/>
</dbReference>
<dbReference type="Pfam" id="PF00460">
    <property type="entry name" value="Flg_bb_rod"/>
    <property type="match status" value="1"/>
</dbReference>
<dbReference type="Pfam" id="PF06429">
    <property type="entry name" value="Flg_bbr_C"/>
    <property type="match status" value="1"/>
</dbReference>
<dbReference type="PROSITE" id="PS00588">
    <property type="entry name" value="FLAGELLA_BB_ROD"/>
    <property type="match status" value="1"/>
</dbReference>
<sequence length="134" mass="13982">MALLNIFDIAGSALAAQSKRLNVAASNLANADSVTGPDGQPYRAKQVVFQVDAAPGQATGGVKVASVIESQAPEKLVYEPGNPLADANGYVKMPNVDVVGEMVNTMSASRSYQANIEVLNTVKSMMLKTLTLGQ</sequence>
<comment type="subunit">
    <text evidence="1">The basal body constitutes a major portion of the flagellar organelle and consists of four rings (L,P,S, and M) mounted on a central rod. The rod consists of about 26 subunits of FlgG in the distal portion, and FlgB, FlgC and FlgF are thought to build up the proximal portion of the rod with about 6 subunits each (By similarity).</text>
</comment>
<comment type="subcellular location">
    <subcellularLocation>
        <location evidence="1">Bacterial flagellum basal body</location>
    </subcellularLocation>
</comment>
<comment type="similarity">
    <text evidence="2">Belongs to the flagella basal body rod proteins family.</text>
</comment>
<proteinExistence type="inferred from homology"/>
<accession>P0A1I8</accession>
<accession>P16438</accession>
<feature type="chain" id="PRO_0000180806" description="Flagellar basal-body rod protein FlgC">
    <location>
        <begin position="1"/>
        <end position="134"/>
    </location>
</feature>
<reference key="1">
    <citation type="journal article" date="2001" name="Nature">
        <title>Complete genome sequence of a multiple drug resistant Salmonella enterica serovar Typhi CT18.</title>
        <authorList>
            <person name="Parkhill J."/>
            <person name="Dougan G."/>
            <person name="James K.D."/>
            <person name="Thomson N.R."/>
            <person name="Pickard D."/>
            <person name="Wain J."/>
            <person name="Churcher C.M."/>
            <person name="Mungall K.L."/>
            <person name="Bentley S.D."/>
            <person name="Holden M.T.G."/>
            <person name="Sebaihia M."/>
            <person name="Baker S."/>
            <person name="Basham D."/>
            <person name="Brooks K."/>
            <person name="Chillingworth T."/>
            <person name="Connerton P."/>
            <person name="Cronin A."/>
            <person name="Davis P."/>
            <person name="Davies R.M."/>
            <person name="Dowd L."/>
            <person name="White N."/>
            <person name="Farrar J."/>
            <person name="Feltwell T."/>
            <person name="Hamlin N."/>
            <person name="Haque A."/>
            <person name="Hien T.T."/>
            <person name="Holroyd S."/>
            <person name="Jagels K."/>
            <person name="Krogh A."/>
            <person name="Larsen T.S."/>
            <person name="Leather S."/>
            <person name="Moule S."/>
            <person name="O'Gaora P."/>
            <person name="Parry C."/>
            <person name="Quail M.A."/>
            <person name="Rutherford K.M."/>
            <person name="Simmonds M."/>
            <person name="Skelton J."/>
            <person name="Stevens K."/>
            <person name="Whitehead S."/>
            <person name="Barrell B.G."/>
        </authorList>
    </citation>
    <scope>NUCLEOTIDE SEQUENCE [LARGE SCALE GENOMIC DNA]</scope>
    <source>
        <strain>CT18</strain>
    </source>
</reference>
<reference key="2">
    <citation type="journal article" date="2003" name="J. Bacteriol.">
        <title>Comparative genomics of Salmonella enterica serovar Typhi strains Ty2 and CT18.</title>
        <authorList>
            <person name="Deng W."/>
            <person name="Liou S.-R."/>
            <person name="Plunkett G. III"/>
            <person name="Mayhew G.F."/>
            <person name="Rose D.J."/>
            <person name="Burland V."/>
            <person name="Kodoyianni V."/>
            <person name="Schwartz D.C."/>
            <person name="Blattner F.R."/>
        </authorList>
    </citation>
    <scope>NUCLEOTIDE SEQUENCE [LARGE SCALE GENOMIC DNA]</scope>
    <source>
        <strain>ATCC 700931 / Ty2</strain>
    </source>
</reference>
<protein>
    <recommendedName>
        <fullName>Flagellar basal-body rod protein FlgC</fullName>
    </recommendedName>
    <alternativeName>
        <fullName>Putative proximal rod protein</fullName>
    </alternativeName>
</protein>
<name>FLGC_SALTI</name>